<accession>Q1LU57</accession>
<reference key="1">
    <citation type="journal article" date="2006" name="PLoS Biol.">
        <title>Metabolic complementarity and genomics of the dual bacterial symbiosis of sharpshooters.</title>
        <authorList>
            <person name="Wu D."/>
            <person name="Daugherty S.C."/>
            <person name="Van Aken S.E."/>
            <person name="Pai G.H."/>
            <person name="Watkins K.L."/>
            <person name="Khouri H."/>
            <person name="Tallon L.J."/>
            <person name="Zaborsky J.M."/>
            <person name="Dunbar H.E."/>
            <person name="Tran P.L."/>
            <person name="Moran N.A."/>
            <person name="Eisen J.A."/>
        </authorList>
    </citation>
    <scope>NUCLEOTIDE SEQUENCE [LARGE SCALE GENOMIC DNA]</scope>
</reference>
<proteinExistence type="inferred from homology"/>
<comment type="function">
    <text evidence="1">Cell wall formation. Adds enolpyruvyl to UDP-N-acetylglucosamine.</text>
</comment>
<comment type="catalytic activity">
    <reaction evidence="1">
        <text>phosphoenolpyruvate + UDP-N-acetyl-alpha-D-glucosamine = UDP-N-acetyl-3-O-(1-carboxyvinyl)-alpha-D-glucosamine + phosphate</text>
        <dbReference type="Rhea" id="RHEA:18681"/>
        <dbReference type="ChEBI" id="CHEBI:43474"/>
        <dbReference type="ChEBI" id="CHEBI:57705"/>
        <dbReference type="ChEBI" id="CHEBI:58702"/>
        <dbReference type="ChEBI" id="CHEBI:68483"/>
        <dbReference type="EC" id="2.5.1.7"/>
    </reaction>
</comment>
<comment type="pathway">
    <text evidence="1">Cell wall biogenesis; peptidoglycan biosynthesis.</text>
</comment>
<comment type="subcellular location">
    <subcellularLocation>
        <location evidence="1">Cytoplasm</location>
    </subcellularLocation>
</comment>
<comment type="similarity">
    <text evidence="1">Belongs to the EPSP synthase family. MurA subfamily.</text>
</comment>
<evidence type="ECO:0000255" key="1">
    <source>
        <dbReference type="HAMAP-Rule" id="MF_00111"/>
    </source>
</evidence>
<feature type="chain" id="PRO_1000023020" description="UDP-N-acetylglucosamine 1-carboxyvinyltransferase">
    <location>
        <begin position="1"/>
        <end position="418"/>
    </location>
</feature>
<feature type="active site" description="Proton donor" evidence="1">
    <location>
        <position position="115"/>
    </location>
</feature>
<feature type="binding site" evidence="1">
    <location>
        <begin position="22"/>
        <end position="23"/>
    </location>
    <ligand>
        <name>phosphoenolpyruvate</name>
        <dbReference type="ChEBI" id="CHEBI:58702"/>
    </ligand>
</feature>
<feature type="binding site" evidence="1">
    <location>
        <position position="91"/>
    </location>
    <ligand>
        <name>UDP-N-acetyl-alpha-D-glucosamine</name>
        <dbReference type="ChEBI" id="CHEBI:57705"/>
    </ligand>
</feature>
<feature type="binding site" evidence="1">
    <location>
        <begin position="120"/>
        <end position="124"/>
    </location>
    <ligand>
        <name>UDP-N-acetyl-alpha-D-glucosamine</name>
        <dbReference type="ChEBI" id="CHEBI:57705"/>
    </ligand>
</feature>
<feature type="binding site" evidence="1">
    <location>
        <begin position="160"/>
        <end position="163"/>
    </location>
    <ligand>
        <name>UDP-N-acetyl-alpha-D-glucosamine</name>
        <dbReference type="ChEBI" id="CHEBI:57705"/>
    </ligand>
</feature>
<feature type="binding site" evidence="1">
    <location>
        <position position="305"/>
    </location>
    <ligand>
        <name>UDP-N-acetyl-alpha-D-glucosamine</name>
        <dbReference type="ChEBI" id="CHEBI:57705"/>
    </ligand>
</feature>
<feature type="binding site" evidence="1">
    <location>
        <position position="327"/>
    </location>
    <ligand>
        <name>UDP-N-acetyl-alpha-D-glucosamine</name>
        <dbReference type="ChEBI" id="CHEBI:57705"/>
    </ligand>
</feature>
<feature type="modified residue" description="2-(S-cysteinyl)pyruvic acid O-phosphothioketal" evidence="1">
    <location>
        <position position="115"/>
    </location>
</feature>
<organism>
    <name type="scientific">Baumannia cicadellinicola subsp. Homalodisca coagulata</name>
    <dbReference type="NCBI Taxonomy" id="374463"/>
    <lineage>
        <taxon>Bacteria</taxon>
        <taxon>Pseudomonadati</taxon>
        <taxon>Pseudomonadota</taxon>
        <taxon>Gammaproteobacteria</taxon>
        <taxon>Candidatus Palibaumannia</taxon>
    </lineage>
</organism>
<dbReference type="EC" id="2.5.1.7" evidence="1"/>
<dbReference type="EMBL" id="CP000238">
    <property type="protein sequence ID" value="ABF13916.1"/>
    <property type="molecule type" value="Genomic_DNA"/>
</dbReference>
<dbReference type="RefSeq" id="WP_011520240.1">
    <property type="nucleotide sequence ID" value="NC_007984.1"/>
</dbReference>
<dbReference type="SMR" id="Q1LU57"/>
<dbReference type="STRING" id="374463.BCI_0028"/>
<dbReference type="KEGG" id="bci:BCI_0028"/>
<dbReference type="HOGENOM" id="CLU_027387_0_0_6"/>
<dbReference type="OrthoDB" id="9803760at2"/>
<dbReference type="UniPathway" id="UPA00219"/>
<dbReference type="Proteomes" id="UP000002427">
    <property type="component" value="Chromosome"/>
</dbReference>
<dbReference type="GO" id="GO:0005737">
    <property type="term" value="C:cytoplasm"/>
    <property type="evidence" value="ECO:0007669"/>
    <property type="project" value="UniProtKB-SubCell"/>
</dbReference>
<dbReference type="GO" id="GO:0008760">
    <property type="term" value="F:UDP-N-acetylglucosamine 1-carboxyvinyltransferase activity"/>
    <property type="evidence" value="ECO:0007669"/>
    <property type="project" value="UniProtKB-UniRule"/>
</dbReference>
<dbReference type="GO" id="GO:0051301">
    <property type="term" value="P:cell division"/>
    <property type="evidence" value="ECO:0007669"/>
    <property type="project" value="UniProtKB-KW"/>
</dbReference>
<dbReference type="GO" id="GO:0071555">
    <property type="term" value="P:cell wall organization"/>
    <property type="evidence" value="ECO:0007669"/>
    <property type="project" value="UniProtKB-KW"/>
</dbReference>
<dbReference type="GO" id="GO:0009252">
    <property type="term" value="P:peptidoglycan biosynthetic process"/>
    <property type="evidence" value="ECO:0007669"/>
    <property type="project" value="UniProtKB-UniRule"/>
</dbReference>
<dbReference type="GO" id="GO:0008360">
    <property type="term" value="P:regulation of cell shape"/>
    <property type="evidence" value="ECO:0007669"/>
    <property type="project" value="UniProtKB-KW"/>
</dbReference>
<dbReference type="GO" id="GO:0019277">
    <property type="term" value="P:UDP-N-acetylgalactosamine biosynthetic process"/>
    <property type="evidence" value="ECO:0007669"/>
    <property type="project" value="InterPro"/>
</dbReference>
<dbReference type="CDD" id="cd01555">
    <property type="entry name" value="UdpNAET"/>
    <property type="match status" value="1"/>
</dbReference>
<dbReference type="FunFam" id="3.65.10.10:FF:000002">
    <property type="entry name" value="UDP-N-acetylglucosamine 1-carboxyvinyltransferase"/>
    <property type="match status" value="1"/>
</dbReference>
<dbReference type="Gene3D" id="3.65.10.10">
    <property type="entry name" value="Enolpyruvate transferase domain"/>
    <property type="match status" value="2"/>
</dbReference>
<dbReference type="HAMAP" id="MF_00111">
    <property type="entry name" value="MurA"/>
    <property type="match status" value="1"/>
</dbReference>
<dbReference type="InterPro" id="IPR001986">
    <property type="entry name" value="Enolpyruvate_Tfrase_dom"/>
</dbReference>
<dbReference type="InterPro" id="IPR036968">
    <property type="entry name" value="Enolpyruvate_Tfrase_sf"/>
</dbReference>
<dbReference type="InterPro" id="IPR050068">
    <property type="entry name" value="MurA_subfamily"/>
</dbReference>
<dbReference type="InterPro" id="IPR013792">
    <property type="entry name" value="RNA3'P_cycl/enolpyr_Trfase_a/b"/>
</dbReference>
<dbReference type="InterPro" id="IPR005750">
    <property type="entry name" value="UDP_GlcNAc_COvinyl_MurA"/>
</dbReference>
<dbReference type="NCBIfam" id="TIGR01072">
    <property type="entry name" value="murA"/>
    <property type="match status" value="1"/>
</dbReference>
<dbReference type="NCBIfam" id="NF006873">
    <property type="entry name" value="PRK09369.1"/>
    <property type="match status" value="1"/>
</dbReference>
<dbReference type="PANTHER" id="PTHR43783">
    <property type="entry name" value="UDP-N-ACETYLGLUCOSAMINE 1-CARBOXYVINYLTRANSFERASE"/>
    <property type="match status" value="1"/>
</dbReference>
<dbReference type="PANTHER" id="PTHR43783:SF1">
    <property type="entry name" value="UDP-N-ACETYLGLUCOSAMINE 1-CARBOXYVINYLTRANSFERASE"/>
    <property type="match status" value="1"/>
</dbReference>
<dbReference type="Pfam" id="PF00275">
    <property type="entry name" value="EPSP_synthase"/>
    <property type="match status" value="1"/>
</dbReference>
<dbReference type="SUPFAM" id="SSF55205">
    <property type="entry name" value="EPT/RTPC-like"/>
    <property type="match status" value="1"/>
</dbReference>
<name>MURA_BAUCH</name>
<sequence length="418" mass="44770">MDKFRIQGPTQLIGEVTIAGAKNSALPILFATLLAEEPVNIHNVPKLKDIDTAIQLISQLGAKVKYNKSVYVDASNIAVYCAPYDLVKTMRASIWALGPLVARFGQGQVSLPGGCAIGARPVDLHLDGLAKLGATITLEKGYVKAYIKGRLRGAHIVMDKVSVGATVTVMSAATLAQGITIIDNAALEPEIVDTANFLITLGANIIGAGSNQIIIDGVTSLGGGEYRVLPDRIETGTFLVAAAISRGHIVCHATRPNMLDAVIAKLRETGAKIETGEDWISLNIHGKRPKAITVRTAPYPGFPTDMQAQFSLLNLIAKGTSVITETIFENRFMHIPELMRMGVHAKIENNTIICHGVEKLSGAQVMATDLRASASLVLAGCIAEGVTIVDRIYHIDRGYDCIENKLRNLGANIERIYS</sequence>
<keyword id="KW-0131">Cell cycle</keyword>
<keyword id="KW-0132">Cell division</keyword>
<keyword id="KW-0133">Cell shape</keyword>
<keyword id="KW-0961">Cell wall biogenesis/degradation</keyword>
<keyword id="KW-0963">Cytoplasm</keyword>
<keyword id="KW-0573">Peptidoglycan synthesis</keyword>
<keyword id="KW-0670">Pyruvate</keyword>
<keyword id="KW-1185">Reference proteome</keyword>
<keyword id="KW-0808">Transferase</keyword>
<gene>
    <name evidence="1" type="primary">murA</name>
    <name type="ordered locus">BCI_0028</name>
</gene>
<protein>
    <recommendedName>
        <fullName evidence="1">UDP-N-acetylglucosamine 1-carboxyvinyltransferase</fullName>
        <ecNumber evidence="1">2.5.1.7</ecNumber>
    </recommendedName>
    <alternativeName>
        <fullName evidence="1">Enoylpyruvate transferase</fullName>
    </alternativeName>
    <alternativeName>
        <fullName evidence="1">UDP-N-acetylglucosamine enolpyruvyl transferase</fullName>
        <shortName evidence="1">EPT</shortName>
    </alternativeName>
</protein>